<keyword id="KW-0963">Cytoplasm</keyword>
<keyword id="KW-0312">Gluconeogenesis</keyword>
<keyword id="KW-0324">Glycolysis</keyword>
<keyword id="KW-0413">Isomerase</keyword>
<keyword id="KW-1185">Reference proteome</keyword>
<sequence>MTSTFAPTPLTQRAAWQALAAHYEQIREIHLRALFAEDPSRGERFALEAEGFYLDYSKNRLTDETLRLLSVLAEESDLRGRIEAMFSGEKINTTEQRSVLHTALRAPRGATVIEDGENVVPEVHAVLDRMAEFADRVRGGEWRGYTGRRIRTVVNIGIGGSYLGPDMAYDALKHYSDRDLKVRFAANVDGSNFAEVIHDLEPDETLFIVCSKTFTTLETMTNAHSARQWCLAALGDEQAIAKHFVAVSTNAAEVEKFGIDTAHMFGFWDWVGGRYSMDSAIGLSTMIAVGPEHFRAMLAGFHAMDEHFRTAPFERNLPVLMALIGLWYNNFFGAQTLAVLPYDYYLGKLPAYLQQLDMESNGKHVDIDGQPVTYQTGPIIWGQPGTDGQHSFYQLIHQGTKLIPCDFIGFCQTLNPIAPHHDQLMANFFAQTEALAFGKTEAEVRAEGVADWLLPHRVFEGNRPTNTLLAERLTPEVLGKLIALYEHKVFTQGVIWNLDSFDQWGVELGKVLAGRIIPELESAEEPELAHDSSTNALIRRYRRAKRQN</sequence>
<evidence type="ECO:0000255" key="1">
    <source>
        <dbReference type="HAMAP-Rule" id="MF_00473"/>
    </source>
</evidence>
<feature type="chain" id="PRO_0000180648" description="Glucose-6-phosphate isomerase">
    <location>
        <begin position="1"/>
        <end position="548"/>
    </location>
</feature>
<feature type="active site" description="Proton donor" evidence="1">
    <location>
        <position position="359"/>
    </location>
</feature>
<feature type="active site" evidence="1">
    <location>
        <position position="390"/>
    </location>
</feature>
<feature type="active site" evidence="1">
    <location>
        <position position="510"/>
    </location>
</feature>
<gene>
    <name evidence="1" type="primary">pgi</name>
    <name type="ordered locus">gll1692</name>
</gene>
<organism>
    <name type="scientific">Gloeobacter violaceus (strain ATCC 29082 / PCC 7421)</name>
    <dbReference type="NCBI Taxonomy" id="251221"/>
    <lineage>
        <taxon>Bacteria</taxon>
        <taxon>Bacillati</taxon>
        <taxon>Cyanobacteriota</taxon>
        <taxon>Cyanophyceae</taxon>
        <taxon>Gloeobacterales</taxon>
        <taxon>Gloeobacteraceae</taxon>
        <taxon>Gloeobacter</taxon>
    </lineage>
</organism>
<protein>
    <recommendedName>
        <fullName evidence="1">Glucose-6-phosphate isomerase</fullName>
        <shortName evidence="1">GPI</shortName>
        <ecNumber evidence="1">5.3.1.9</ecNumber>
    </recommendedName>
    <alternativeName>
        <fullName evidence="1">Phosphoglucose isomerase</fullName>
        <shortName evidence="1">PGI</shortName>
    </alternativeName>
    <alternativeName>
        <fullName evidence="1">Phosphohexose isomerase</fullName>
        <shortName evidence="1">PHI</shortName>
    </alternativeName>
</protein>
<reference key="1">
    <citation type="journal article" date="2003" name="DNA Res.">
        <title>Complete genome structure of Gloeobacter violaceus PCC 7421, a cyanobacterium that lacks thylakoids.</title>
        <authorList>
            <person name="Nakamura Y."/>
            <person name="Kaneko T."/>
            <person name="Sato S."/>
            <person name="Mimuro M."/>
            <person name="Miyashita H."/>
            <person name="Tsuchiya T."/>
            <person name="Sasamoto S."/>
            <person name="Watanabe A."/>
            <person name="Kawashima K."/>
            <person name="Kishida Y."/>
            <person name="Kiyokawa C."/>
            <person name="Kohara M."/>
            <person name="Matsumoto M."/>
            <person name="Matsuno A."/>
            <person name="Nakazaki N."/>
            <person name="Shimpo S."/>
            <person name="Takeuchi C."/>
            <person name="Yamada M."/>
            <person name="Tabata S."/>
        </authorList>
    </citation>
    <scope>NUCLEOTIDE SEQUENCE [LARGE SCALE GENOMIC DNA]</scope>
    <source>
        <strain>ATCC 29082 / PCC 7421</strain>
    </source>
</reference>
<name>G6PI_GLOVI</name>
<proteinExistence type="inferred from homology"/>
<dbReference type="EC" id="5.3.1.9" evidence="1"/>
<dbReference type="EMBL" id="BA000045">
    <property type="protein sequence ID" value="BAC89633.1"/>
    <property type="molecule type" value="Genomic_DNA"/>
</dbReference>
<dbReference type="RefSeq" id="NP_924638.1">
    <property type="nucleotide sequence ID" value="NC_005125.1"/>
</dbReference>
<dbReference type="RefSeq" id="WP_011141691.1">
    <property type="nucleotide sequence ID" value="NC_005125.1"/>
</dbReference>
<dbReference type="SMR" id="Q7NJY9"/>
<dbReference type="FunCoup" id="Q7NJY9">
    <property type="interactions" value="331"/>
</dbReference>
<dbReference type="STRING" id="251221.gene:10759183"/>
<dbReference type="EnsemblBacteria" id="BAC89633">
    <property type="protein sequence ID" value="BAC89633"/>
    <property type="gene ID" value="BAC89633"/>
</dbReference>
<dbReference type="KEGG" id="gvi:gll1692"/>
<dbReference type="PATRIC" id="fig|251221.4.peg.1725"/>
<dbReference type="eggNOG" id="COG0166">
    <property type="taxonomic scope" value="Bacteria"/>
</dbReference>
<dbReference type="HOGENOM" id="CLU_017947_3_1_3"/>
<dbReference type="InParanoid" id="Q7NJY9"/>
<dbReference type="OrthoDB" id="140919at2"/>
<dbReference type="PhylomeDB" id="Q7NJY9"/>
<dbReference type="UniPathway" id="UPA00109">
    <property type="reaction ID" value="UER00181"/>
</dbReference>
<dbReference type="UniPathway" id="UPA00138"/>
<dbReference type="Proteomes" id="UP000000557">
    <property type="component" value="Chromosome"/>
</dbReference>
<dbReference type="GO" id="GO:0005829">
    <property type="term" value="C:cytosol"/>
    <property type="evidence" value="ECO:0000318"/>
    <property type="project" value="GO_Central"/>
</dbReference>
<dbReference type="GO" id="GO:0097367">
    <property type="term" value="F:carbohydrate derivative binding"/>
    <property type="evidence" value="ECO:0007669"/>
    <property type="project" value="InterPro"/>
</dbReference>
<dbReference type="GO" id="GO:0004347">
    <property type="term" value="F:glucose-6-phosphate isomerase activity"/>
    <property type="evidence" value="ECO:0000318"/>
    <property type="project" value="GO_Central"/>
</dbReference>
<dbReference type="GO" id="GO:0048029">
    <property type="term" value="F:monosaccharide binding"/>
    <property type="evidence" value="ECO:0000318"/>
    <property type="project" value="GO_Central"/>
</dbReference>
<dbReference type="GO" id="GO:0006094">
    <property type="term" value="P:gluconeogenesis"/>
    <property type="evidence" value="ECO:0000318"/>
    <property type="project" value="GO_Central"/>
</dbReference>
<dbReference type="GO" id="GO:0051156">
    <property type="term" value="P:glucose 6-phosphate metabolic process"/>
    <property type="evidence" value="ECO:0000318"/>
    <property type="project" value="GO_Central"/>
</dbReference>
<dbReference type="GO" id="GO:0006096">
    <property type="term" value="P:glycolytic process"/>
    <property type="evidence" value="ECO:0000318"/>
    <property type="project" value="GO_Central"/>
</dbReference>
<dbReference type="CDD" id="cd05015">
    <property type="entry name" value="SIS_PGI_1"/>
    <property type="match status" value="1"/>
</dbReference>
<dbReference type="CDD" id="cd05016">
    <property type="entry name" value="SIS_PGI_2"/>
    <property type="match status" value="1"/>
</dbReference>
<dbReference type="FunFam" id="1.10.1390.10:FF:000001">
    <property type="entry name" value="Glucose-6-phosphate isomerase"/>
    <property type="match status" value="1"/>
</dbReference>
<dbReference type="FunFam" id="3.40.50.10490:FF:000018">
    <property type="entry name" value="Glucose-6-phosphate isomerase"/>
    <property type="match status" value="1"/>
</dbReference>
<dbReference type="Gene3D" id="1.10.1390.10">
    <property type="match status" value="1"/>
</dbReference>
<dbReference type="Gene3D" id="3.40.50.10490">
    <property type="entry name" value="Glucose-6-phosphate isomerase like protein, domain 1"/>
    <property type="match status" value="2"/>
</dbReference>
<dbReference type="HAMAP" id="MF_00473">
    <property type="entry name" value="G6P_isomerase"/>
    <property type="match status" value="1"/>
</dbReference>
<dbReference type="InterPro" id="IPR001672">
    <property type="entry name" value="G6P_Isomerase"/>
</dbReference>
<dbReference type="InterPro" id="IPR023096">
    <property type="entry name" value="G6P_Isomerase_C"/>
</dbReference>
<dbReference type="InterPro" id="IPR018189">
    <property type="entry name" value="Phosphoglucose_isomerase_CS"/>
</dbReference>
<dbReference type="InterPro" id="IPR046348">
    <property type="entry name" value="SIS_dom_sf"/>
</dbReference>
<dbReference type="InterPro" id="IPR035476">
    <property type="entry name" value="SIS_PGI_1"/>
</dbReference>
<dbReference type="InterPro" id="IPR035482">
    <property type="entry name" value="SIS_PGI_2"/>
</dbReference>
<dbReference type="NCBIfam" id="NF001211">
    <property type="entry name" value="PRK00179.1"/>
    <property type="match status" value="1"/>
</dbReference>
<dbReference type="PANTHER" id="PTHR11469">
    <property type="entry name" value="GLUCOSE-6-PHOSPHATE ISOMERASE"/>
    <property type="match status" value="1"/>
</dbReference>
<dbReference type="PANTHER" id="PTHR11469:SF1">
    <property type="entry name" value="GLUCOSE-6-PHOSPHATE ISOMERASE"/>
    <property type="match status" value="1"/>
</dbReference>
<dbReference type="Pfam" id="PF00342">
    <property type="entry name" value="PGI"/>
    <property type="match status" value="1"/>
</dbReference>
<dbReference type="PRINTS" id="PR00662">
    <property type="entry name" value="G6PISOMERASE"/>
</dbReference>
<dbReference type="SUPFAM" id="SSF53697">
    <property type="entry name" value="SIS domain"/>
    <property type="match status" value="1"/>
</dbReference>
<dbReference type="PROSITE" id="PS00765">
    <property type="entry name" value="P_GLUCOSE_ISOMERASE_1"/>
    <property type="match status" value="1"/>
</dbReference>
<dbReference type="PROSITE" id="PS00174">
    <property type="entry name" value="P_GLUCOSE_ISOMERASE_2"/>
    <property type="match status" value="1"/>
</dbReference>
<dbReference type="PROSITE" id="PS51463">
    <property type="entry name" value="P_GLUCOSE_ISOMERASE_3"/>
    <property type="match status" value="1"/>
</dbReference>
<comment type="function">
    <text evidence="1">Catalyzes the reversible isomerization of glucose-6-phosphate to fructose-6-phosphate.</text>
</comment>
<comment type="catalytic activity">
    <reaction evidence="1">
        <text>alpha-D-glucose 6-phosphate = beta-D-fructose 6-phosphate</text>
        <dbReference type="Rhea" id="RHEA:11816"/>
        <dbReference type="ChEBI" id="CHEBI:57634"/>
        <dbReference type="ChEBI" id="CHEBI:58225"/>
        <dbReference type="EC" id="5.3.1.9"/>
    </reaction>
</comment>
<comment type="pathway">
    <text evidence="1">Carbohydrate biosynthesis; gluconeogenesis.</text>
</comment>
<comment type="pathway">
    <text evidence="1">Carbohydrate degradation; glycolysis; D-glyceraldehyde 3-phosphate and glycerone phosphate from D-glucose: step 2/4.</text>
</comment>
<comment type="subcellular location">
    <subcellularLocation>
        <location evidence="1">Cytoplasm</location>
    </subcellularLocation>
</comment>
<comment type="similarity">
    <text evidence="1">Belongs to the GPI family.</text>
</comment>
<accession>Q7NJY9</accession>